<gene>
    <name evidence="1" type="primary">alaS</name>
    <name type="ordered locus">RMA_1379</name>
</gene>
<sequence>MTKFTTEEVRSKFITYFKANNHTHVPTSSLIPHNDPSLMFVNSGMVQFKNVFTGQEKRPYNKAVTSQKSLRAGGKHNDLENVGYTARHHTFFEMLGNFSFGDYFKEQAIYYAWNLLTKEFELPKDKLYATIYHTDDEAASYWKKIAGFGDDRIIKIKTNDNFWSMGDTGPCGPCSEIFYDHGEQIYGGLPGTKDEDGDRFIEIWNMVFMQYEQIDKDTSIELSQKSIDTGMGLERMTAVLQHVNNNYNIDLFQEIINFTENIVKVKVEGEAKFSYRVIADHLRASSFLIADGVIPSNEGRGYVLRRIMRRSMRHAHMLGAKEPLMYKLLPKLVDLMGNVYPELKRAERFISSILEQEEIRFKATLERGLKLLTEETEMLTKGNELSGEVAFKLYDTYGFPLDLTEDILKTRDISVDHKGFEEQMLMQKERARKSWLGSGESKTDQLWFDIKEQHGSTEFLGYTLNEAKCKIIALIKNNNLVNDIKEIDTQFLLISNQTPFYGESGGQIGDIGTIFAKDSEVEVIDTLKYLGSIIVHKCILKKGQINVGENANFSIDIRYRQNLRIHHSATHILHAVLHEVLGKHVTQKGSLVAPTYLRFDISHSKAVTNEEITLIEDKVNEIIRDNHEVNTTFMATEDAVKQGAMALFGEKYDSEVRVVKMGETSLELCAGTHVRRTGDIGCFKITSESAIAAGVRRIEAVCGEFVIKLMREKDSLLKSIESSLKTNKNELITKVNNILERNKEVEKELEKTHLASLDLSIEQIEKQAAQITGIKLLYKKVGNIDNKILRQAAENLTKKVEDLIMVYIAEGIGKLSITVAVSKAITDKYNADIIAKKLSLFLGGSGGGGQASLAQAGGNDIGKLTNIHKKLYSLLTVS</sequence>
<dbReference type="EC" id="6.1.1.7" evidence="1"/>
<dbReference type="EMBL" id="CP000683">
    <property type="protein sequence ID" value="ABV85309.1"/>
    <property type="status" value="ALT_INIT"/>
    <property type="molecule type" value="Genomic_DNA"/>
</dbReference>
<dbReference type="RefSeq" id="WP_041404915.1">
    <property type="nucleotide sequence ID" value="NC_009900.1"/>
</dbReference>
<dbReference type="SMR" id="A8F323"/>
<dbReference type="KEGG" id="rms:RMA_1379"/>
<dbReference type="HOGENOM" id="CLU_004485_1_1_5"/>
<dbReference type="Proteomes" id="UP000001311">
    <property type="component" value="Chromosome"/>
</dbReference>
<dbReference type="GO" id="GO:0005829">
    <property type="term" value="C:cytosol"/>
    <property type="evidence" value="ECO:0007669"/>
    <property type="project" value="TreeGrafter"/>
</dbReference>
<dbReference type="GO" id="GO:0004813">
    <property type="term" value="F:alanine-tRNA ligase activity"/>
    <property type="evidence" value="ECO:0007669"/>
    <property type="project" value="UniProtKB-UniRule"/>
</dbReference>
<dbReference type="GO" id="GO:0002161">
    <property type="term" value="F:aminoacyl-tRNA deacylase activity"/>
    <property type="evidence" value="ECO:0007669"/>
    <property type="project" value="TreeGrafter"/>
</dbReference>
<dbReference type="GO" id="GO:0005524">
    <property type="term" value="F:ATP binding"/>
    <property type="evidence" value="ECO:0007669"/>
    <property type="project" value="UniProtKB-UniRule"/>
</dbReference>
<dbReference type="GO" id="GO:0000049">
    <property type="term" value="F:tRNA binding"/>
    <property type="evidence" value="ECO:0007669"/>
    <property type="project" value="UniProtKB-KW"/>
</dbReference>
<dbReference type="GO" id="GO:0008270">
    <property type="term" value="F:zinc ion binding"/>
    <property type="evidence" value="ECO:0007669"/>
    <property type="project" value="UniProtKB-UniRule"/>
</dbReference>
<dbReference type="GO" id="GO:0006419">
    <property type="term" value="P:alanyl-tRNA aminoacylation"/>
    <property type="evidence" value="ECO:0007669"/>
    <property type="project" value="UniProtKB-UniRule"/>
</dbReference>
<dbReference type="GO" id="GO:0045892">
    <property type="term" value="P:negative regulation of DNA-templated transcription"/>
    <property type="evidence" value="ECO:0007669"/>
    <property type="project" value="TreeGrafter"/>
</dbReference>
<dbReference type="CDD" id="cd00673">
    <property type="entry name" value="AlaRS_core"/>
    <property type="match status" value="1"/>
</dbReference>
<dbReference type="FunFam" id="3.10.310.40:FF:000001">
    <property type="entry name" value="Alanine--tRNA ligase"/>
    <property type="match status" value="1"/>
</dbReference>
<dbReference type="FunFam" id="3.30.54.20:FF:000001">
    <property type="entry name" value="Alanine--tRNA ligase"/>
    <property type="match status" value="1"/>
</dbReference>
<dbReference type="FunFam" id="3.30.930.10:FF:000004">
    <property type="entry name" value="Alanine--tRNA ligase"/>
    <property type="match status" value="1"/>
</dbReference>
<dbReference type="FunFam" id="3.30.980.10:FF:000004">
    <property type="entry name" value="Alanine--tRNA ligase, cytoplasmic"/>
    <property type="match status" value="1"/>
</dbReference>
<dbReference type="Gene3D" id="2.40.30.130">
    <property type="match status" value="1"/>
</dbReference>
<dbReference type="Gene3D" id="3.10.310.40">
    <property type="match status" value="1"/>
</dbReference>
<dbReference type="Gene3D" id="3.30.54.20">
    <property type="match status" value="1"/>
</dbReference>
<dbReference type="Gene3D" id="6.10.250.550">
    <property type="match status" value="1"/>
</dbReference>
<dbReference type="Gene3D" id="3.30.930.10">
    <property type="entry name" value="Bira Bifunctional Protein, Domain 2"/>
    <property type="match status" value="1"/>
</dbReference>
<dbReference type="Gene3D" id="3.30.980.10">
    <property type="entry name" value="Threonyl-trna Synthetase, Chain A, domain 2"/>
    <property type="match status" value="1"/>
</dbReference>
<dbReference type="HAMAP" id="MF_00036_B">
    <property type="entry name" value="Ala_tRNA_synth_B"/>
    <property type="match status" value="1"/>
</dbReference>
<dbReference type="InterPro" id="IPR045864">
    <property type="entry name" value="aa-tRNA-synth_II/BPL/LPL"/>
</dbReference>
<dbReference type="InterPro" id="IPR002318">
    <property type="entry name" value="Ala-tRNA-lgiase_IIc"/>
</dbReference>
<dbReference type="InterPro" id="IPR018162">
    <property type="entry name" value="Ala-tRNA-ligase_IIc_anticod-bd"/>
</dbReference>
<dbReference type="InterPro" id="IPR018165">
    <property type="entry name" value="Ala-tRNA-synth_IIc_core"/>
</dbReference>
<dbReference type="InterPro" id="IPR018164">
    <property type="entry name" value="Ala-tRNA-synth_IIc_N"/>
</dbReference>
<dbReference type="InterPro" id="IPR050058">
    <property type="entry name" value="Ala-tRNA_ligase"/>
</dbReference>
<dbReference type="InterPro" id="IPR023033">
    <property type="entry name" value="Ala_tRNA_ligase_euk/bac"/>
</dbReference>
<dbReference type="InterPro" id="IPR003156">
    <property type="entry name" value="DHHA1_dom"/>
</dbReference>
<dbReference type="InterPro" id="IPR018163">
    <property type="entry name" value="Thr/Ala-tRNA-synth_IIc_edit"/>
</dbReference>
<dbReference type="InterPro" id="IPR009000">
    <property type="entry name" value="Transl_B-barrel_sf"/>
</dbReference>
<dbReference type="InterPro" id="IPR012947">
    <property type="entry name" value="tRNA_SAD"/>
</dbReference>
<dbReference type="NCBIfam" id="TIGR00344">
    <property type="entry name" value="alaS"/>
    <property type="match status" value="1"/>
</dbReference>
<dbReference type="PANTHER" id="PTHR11777:SF9">
    <property type="entry name" value="ALANINE--TRNA LIGASE, CYTOPLASMIC"/>
    <property type="match status" value="1"/>
</dbReference>
<dbReference type="PANTHER" id="PTHR11777">
    <property type="entry name" value="ALANYL-TRNA SYNTHETASE"/>
    <property type="match status" value="1"/>
</dbReference>
<dbReference type="Pfam" id="PF02272">
    <property type="entry name" value="DHHA1"/>
    <property type="match status" value="1"/>
</dbReference>
<dbReference type="Pfam" id="PF01411">
    <property type="entry name" value="tRNA-synt_2c"/>
    <property type="match status" value="1"/>
</dbReference>
<dbReference type="Pfam" id="PF07973">
    <property type="entry name" value="tRNA_SAD"/>
    <property type="match status" value="1"/>
</dbReference>
<dbReference type="PRINTS" id="PR00980">
    <property type="entry name" value="TRNASYNTHALA"/>
</dbReference>
<dbReference type="SMART" id="SM00863">
    <property type="entry name" value="tRNA_SAD"/>
    <property type="match status" value="1"/>
</dbReference>
<dbReference type="SUPFAM" id="SSF55681">
    <property type="entry name" value="Class II aaRS and biotin synthetases"/>
    <property type="match status" value="1"/>
</dbReference>
<dbReference type="SUPFAM" id="SSF101353">
    <property type="entry name" value="Putative anticodon-binding domain of alanyl-tRNA synthetase (AlaRS)"/>
    <property type="match status" value="1"/>
</dbReference>
<dbReference type="SUPFAM" id="SSF55186">
    <property type="entry name" value="ThrRS/AlaRS common domain"/>
    <property type="match status" value="1"/>
</dbReference>
<dbReference type="SUPFAM" id="SSF50447">
    <property type="entry name" value="Translation proteins"/>
    <property type="match status" value="1"/>
</dbReference>
<dbReference type="PROSITE" id="PS50860">
    <property type="entry name" value="AA_TRNA_LIGASE_II_ALA"/>
    <property type="match status" value="1"/>
</dbReference>
<organism>
    <name type="scientific">Rickettsia massiliae (strain Mtu5)</name>
    <dbReference type="NCBI Taxonomy" id="416276"/>
    <lineage>
        <taxon>Bacteria</taxon>
        <taxon>Pseudomonadati</taxon>
        <taxon>Pseudomonadota</taxon>
        <taxon>Alphaproteobacteria</taxon>
        <taxon>Rickettsiales</taxon>
        <taxon>Rickettsiaceae</taxon>
        <taxon>Rickettsieae</taxon>
        <taxon>Rickettsia</taxon>
        <taxon>spotted fever group</taxon>
    </lineage>
</organism>
<accession>A8F323</accession>
<name>SYA_RICM5</name>
<proteinExistence type="inferred from homology"/>
<protein>
    <recommendedName>
        <fullName evidence="1">Alanine--tRNA ligase</fullName>
        <ecNumber evidence="1">6.1.1.7</ecNumber>
    </recommendedName>
    <alternativeName>
        <fullName evidence="1">Alanyl-tRNA synthetase</fullName>
        <shortName evidence="1">AlaRS</shortName>
    </alternativeName>
</protein>
<feature type="chain" id="PRO_0000347764" description="Alanine--tRNA ligase">
    <location>
        <begin position="1"/>
        <end position="878"/>
    </location>
</feature>
<feature type="binding site" evidence="1">
    <location>
        <position position="567"/>
    </location>
    <ligand>
        <name>Zn(2+)</name>
        <dbReference type="ChEBI" id="CHEBI:29105"/>
    </ligand>
</feature>
<feature type="binding site" evidence="1">
    <location>
        <position position="571"/>
    </location>
    <ligand>
        <name>Zn(2+)</name>
        <dbReference type="ChEBI" id="CHEBI:29105"/>
    </ligand>
</feature>
<feature type="binding site" evidence="1">
    <location>
        <position position="669"/>
    </location>
    <ligand>
        <name>Zn(2+)</name>
        <dbReference type="ChEBI" id="CHEBI:29105"/>
    </ligand>
</feature>
<feature type="binding site" evidence="1">
    <location>
        <position position="673"/>
    </location>
    <ligand>
        <name>Zn(2+)</name>
        <dbReference type="ChEBI" id="CHEBI:29105"/>
    </ligand>
</feature>
<keyword id="KW-0030">Aminoacyl-tRNA synthetase</keyword>
<keyword id="KW-0067">ATP-binding</keyword>
<keyword id="KW-0963">Cytoplasm</keyword>
<keyword id="KW-0436">Ligase</keyword>
<keyword id="KW-0479">Metal-binding</keyword>
<keyword id="KW-0547">Nucleotide-binding</keyword>
<keyword id="KW-0648">Protein biosynthesis</keyword>
<keyword id="KW-0694">RNA-binding</keyword>
<keyword id="KW-0820">tRNA-binding</keyword>
<keyword id="KW-0862">Zinc</keyword>
<comment type="function">
    <text evidence="1">Catalyzes the attachment of alanine to tRNA(Ala) in a two-step reaction: alanine is first activated by ATP to form Ala-AMP and then transferred to the acceptor end of tRNA(Ala). Also edits incorrectly charged Ser-tRNA(Ala) and Gly-tRNA(Ala) via its editing domain.</text>
</comment>
<comment type="catalytic activity">
    <reaction evidence="1">
        <text>tRNA(Ala) + L-alanine + ATP = L-alanyl-tRNA(Ala) + AMP + diphosphate</text>
        <dbReference type="Rhea" id="RHEA:12540"/>
        <dbReference type="Rhea" id="RHEA-COMP:9657"/>
        <dbReference type="Rhea" id="RHEA-COMP:9923"/>
        <dbReference type="ChEBI" id="CHEBI:30616"/>
        <dbReference type="ChEBI" id="CHEBI:33019"/>
        <dbReference type="ChEBI" id="CHEBI:57972"/>
        <dbReference type="ChEBI" id="CHEBI:78442"/>
        <dbReference type="ChEBI" id="CHEBI:78497"/>
        <dbReference type="ChEBI" id="CHEBI:456215"/>
        <dbReference type="EC" id="6.1.1.7"/>
    </reaction>
</comment>
<comment type="cofactor">
    <cofactor evidence="1">
        <name>Zn(2+)</name>
        <dbReference type="ChEBI" id="CHEBI:29105"/>
    </cofactor>
    <text evidence="1">Binds 1 zinc ion per subunit.</text>
</comment>
<comment type="subcellular location">
    <subcellularLocation>
        <location evidence="1">Cytoplasm</location>
    </subcellularLocation>
</comment>
<comment type="domain">
    <text evidence="1">Consists of three domains; the N-terminal catalytic domain, the editing domain and the C-terminal C-Ala domain. The editing domain removes incorrectly charged amino acids, while the C-Ala domain, along with tRNA(Ala), serves as a bridge to cooperatively bring together the editing and aminoacylation centers thus stimulating deacylation of misacylated tRNAs.</text>
</comment>
<comment type="similarity">
    <text evidence="1">Belongs to the class-II aminoacyl-tRNA synthetase family.</text>
</comment>
<comment type="sequence caution" evidence="2">
    <conflict type="erroneous initiation">
        <sequence resource="EMBL-CDS" id="ABV85309"/>
    </conflict>
</comment>
<reference key="1">
    <citation type="journal article" date="2007" name="Genome Res.">
        <title>Lateral gene transfer between obligate intracellular bacteria: evidence from the Rickettsia massiliae genome.</title>
        <authorList>
            <person name="Blanc G."/>
            <person name="Ogata H."/>
            <person name="Robert C."/>
            <person name="Audic S."/>
            <person name="Claverie J.-M."/>
            <person name="Raoult D."/>
        </authorList>
    </citation>
    <scope>NUCLEOTIDE SEQUENCE [LARGE SCALE GENOMIC DNA]</scope>
    <source>
        <strain>Mtu5</strain>
    </source>
</reference>
<evidence type="ECO:0000255" key="1">
    <source>
        <dbReference type="HAMAP-Rule" id="MF_00036"/>
    </source>
</evidence>
<evidence type="ECO:0000305" key="2"/>